<dbReference type="EMBL" id="CP001322">
    <property type="protein sequence ID" value="ACL03621.1"/>
    <property type="molecule type" value="Genomic_DNA"/>
</dbReference>
<dbReference type="RefSeq" id="WP_012611052.1">
    <property type="nucleotide sequence ID" value="NC_011768.1"/>
</dbReference>
<dbReference type="SMR" id="B8FEU4"/>
<dbReference type="KEGG" id="dal:Dalk_1924"/>
<dbReference type="eggNOG" id="COG0081">
    <property type="taxonomic scope" value="Bacteria"/>
</dbReference>
<dbReference type="HOGENOM" id="CLU_062853_0_0_7"/>
<dbReference type="Proteomes" id="UP000000739">
    <property type="component" value="Chromosome"/>
</dbReference>
<dbReference type="GO" id="GO:0015934">
    <property type="term" value="C:large ribosomal subunit"/>
    <property type="evidence" value="ECO:0007669"/>
    <property type="project" value="InterPro"/>
</dbReference>
<dbReference type="GO" id="GO:0019843">
    <property type="term" value="F:rRNA binding"/>
    <property type="evidence" value="ECO:0007669"/>
    <property type="project" value="UniProtKB-UniRule"/>
</dbReference>
<dbReference type="GO" id="GO:0003735">
    <property type="term" value="F:structural constituent of ribosome"/>
    <property type="evidence" value="ECO:0007669"/>
    <property type="project" value="InterPro"/>
</dbReference>
<dbReference type="GO" id="GO:0000049">
    <property type="term" value="F:tRNA binding"/>
    <property type="evidence" value="ECO:0007669"/>
    <property type="project" value="UniProtKB-KW"/>
</dbReference>
<dbReference type="GO" id="GO:0006417">
    <property type="term" value="P:regulation of translation"/>
    <property type="evidence" value="ECO:0007669"/>
    <property type="project" value="UniProtKB-KW"/>
</dbReference>
<dbReference type="GO" id="GO:0006412">
    <property type="term" value="P:translation"/>
    <property type="evidence" value="ECO:0007669"/>
    <property type="project" value="UniProtKB-UniRule"/>
</dbReference>
<dbReference type="CDD" id="cd00403">
    <property type="entry name" value="Ribosomal_L1"/>
    <property type="match status" value="1"/>
</dbReference>
<dbReference type="FunFam" id="3.40.50.790:FF:000001">
    <property type="entry name" value="50S ribosomal protein L1"/>
    <property type="match status" value="1"/>
</dbReference>
<dbReference type="Gene3D" id="3.30.190.20">
    <property type="match status" value="1"/>
</dbReference>
<dbReference type="Gene3D" id="3.40.50.790">
    <property type="match status" value="1"/>
</dbReference>
<dbReference type="HAMAP" id="MF_01318_B">
    <property type="entry name" value="Ribosomal_uL1_B"/>
    <property type="match status" value="1"/>
</dbReference>
<dbReference type="InterPro" id="IPR005878">
    <property type="entry name" value="Ribosom_uL1_bac-type"/>
</dbReference>
<dbReference type="InterPro" id="IPR002143">
    <property type="entry name" value="Ribosomal_uL1"/>
</dbReference>
<dbReference type="InterPro" id="IPR023674">
    <property type="entry name" value="Ribosomal_uL1-like"/>
</dbReference>
<dbReference type="InterPro" id="IPR028364">
    <property type="entry name" value="Ribosomal_uL1/biogenesis"/>
</dbReference>
<dbReference type="InterPro" id="IPR016095">
    <property type="entry name" value="Ribosomal_uL1_3-a/b-sand"/>
</dbReference>
<dbReference type="InterPro" id="IPR023673">
    <property type="entry name" value="Ribosomal_uL1_CS"/>
</dbReference>
<dbReference type="NCBIfam" id="TIGR01169">
    <property type="entry name" value="rplA_bact"/>
    <property type="match status" value="1"/>
</dbReference>
<dbReference type="PANTHER" id="PTHR36427">
    <property type="entry name" value="54S RIBOSOMAL PROTEIN L1, MITOCHONDRIAL"/>
    <property type="match status" value="1"/>
</dbReference>
<dbReference type="PANTHER" id="PTHR36427:SF3">
    <property type="entry name" value="LARGE RIBOSOMAL SUBUNIT PROTEIN UL1M"/>
    <property type="match status" value="1"/>
</dbReference>
<dbReference type="Pfam" id="PF00687">
    <property type="entry name" value="Ribosomal_L1"/>
    <property type="match status" value="1"/>
</dbReference>
<dbReference type="PIRSF" id="PIRSF002155">
    <property type="entry name" value="Ribosomal_L1"/>
    <property type="match status" value="1"/>
</dbReference>
<dbReference type="SUPFAM" id="SSF56808">
    <property type="entry name" value="Ribosomal protein L1"/>
    <property type="match status" value="1"/>
</dbReference>
<dbReference type="PROSITE" id="PS01199">
    <property type="entry name" value="RIBOSOMAL_L1"/>
    <property type="match status" value="1"/>
</dbReference>
<sequence>MGKPGKKFLESKKKVNRDLKYGVLEALQTAIESSYAKFDETVDVAVRLGVDPRHADQMVRGTCVLPHGTGKDVRVLVFAKGEKEAEAKEAGADFVGNDDLVEKIQGGWLDFDKAIATPDMMGTVGKMGRILGPRGLMPNAKTGTVTFDVAKAVQELKAGKIDFRVERAGILHAPMGKVSFGAEKLLDNISAFFETVQRLKPSAAKGTYMKSIAVSTTMGPGVKIDPTLVKDIVK</sequence>
<name>RL1_DESAL</name>
<proteinExistence type="inferred from homology"/>
<evidence type="ECO:0000255" key="1">
    <source>
        <dbReference type="HAMAP-Rule" id="MF_01318"/>
    </source>
</evidence>
<evidence type="ECO:0000305" key="2"/>
<keyword id="KW-1185">Reference proteome</keyword>
<keyword id="KW-0678">Repressor</keyword>
<keyword id="KW-0687">Ribonucleoprotein</keyword>
<keyword id="KW-0689">Ribosomal protein</keyword>
<keyword id="KW-0694">RNA-binding</keyword>
<keyword id="KW-0699">rRNA-binding</keyword>
<keyword id="KW-0810">Translation regulation</keyword>
<keyword id="KW-0820">tRNA-binding</keyword>
<comment type="function">
    <text evidence="1">Binds directly to 23S rRNA. The L1 stalk is quite mobile in the ribosome, and is involved in E site tRNA release.</text>
</comment>
<comment type="function">
    <text evidence="1">Protein L1 is also a translational repressor protein, it controls the translation of the L11 operon by binding to its mRNA.</text>
</comment>
<comment type="subunit">
    <text evidence="1">Part of the 50S ribosomal subunit.</text>
</comment>
<comment type="similarity">
    <text evidence="1">Belongs to the universal ribosomal protein uL1 family.</text>
</comment>
<gene>
    <name evidence="1" type="primary">rplA</name>
    <name type="ordered locus">Dalk_1924</name>
</gene>
<feature type="chain" id="PRO_1000141390" description="Large ribosomal subunit protein uL1">
    <location>
        <begin position="1"/>
        <end position="234"/>
    </location>
</feature>
<accession>B8FEU4</accession>
<reference key="1">
    <citation type="journal article" date="2012" name="Environ. Microbiol.">
        <title>The genome sequence of Desulfatibacillum alkenivorans AK-01: a blueprint for anaerobic alkane oxidation.</title>
        <authorList>
            <person name="Callaghan A.V."/>
            <person name="Morris B.E."/>
            <person name="Pereira I.A."/>
            <person name="McInerney M.J."/>
            <person name="Austin R.N."/>
            <person name="Groves J.T."/>
            <person name="Kukor J.J."/>
            <person name="Suflita J.M."/>
            <person name="Young L.Y."/>
            <person name="Zylstra G.J."/>
            <person name="Wawrik B."/>
        </authorList>
    </citation>
    <scope>NUCLEOTIDE SEQUENCE [LARGE SCALE GENOMIC DNA]</scope>
    <source>
        <strain>AK-01</strain>
    </source>
</reference>
<organism>
    <name type="scientific">Desulfatibacillum aliphaticivorans</name>
    <dbReference type="NCBI Taxonomy" id="218208"/>
    <lineage>
        <taxon>Bacteria</taxon>
        <taxon>Pseudomonadati</taxon>
        <taxon>Thermodesulfobacteriota</taxon>
        <taxon>Desulfobacteria</taxon>
        <taxon>Desulfobacterales</taxon>
        <taxon>Desulfatibacillaceae</taxon>
        <taxon>Desulfatibacillum</taxon>
    </lineage>
</organism>
<protein>
    <recommendedName>
        <fullName evidence="1">Large ribosomal subunit protein uL1</fullName>
    </recommendedName>
    <alternativeName>
        <fullName evidence="2">50S ribosomal protein L1</fullName>
    </alternativeName>
</protein>